<accession>P41429</accession>
<name>PIKP1_NPVAC</name>
<evidence type="ECO:0000269" key="1">
    <source>
    </source>
</evidence>
<evidence type="ECO:0000269" key="2">
    <source>
    </source>
</evidence>
<proteinExistence type="evidence at protein level"/>
<organismHost>
    <name type="scientific">Lepidoptera</name>
    <name type="common">butterflies and moths</name>
    <dbReference type="NCBI Taxonomy" id="7088"/>
</organismHost>
<feature type="chain" id="PRO_0000132960" description="Protein kinase-interacting protein PIKP1">
    <location>
        <begin position="1"/>
        <end position="169"/>
    </location>
</feature>
<sequence>MSCILTALCKKGQANLNSLIKLQNKKVKNYYVKNNETAIDKMLCIAADIKGQVEQLELVNQYLGAPESEKLDFVYDCSDLDINEKDLKSLCLTKNIAYFTQKYNAPTVLKAQAAVYDSFIKHSELFINAICQMDEKQQVNNFCLDELVKLKLIAIKHLCALEYVIENSI</sequence>
<protein>
    <recommendedName>
        <fullName>Protein kinase-interacting protein PIKP1</fullName>
        <shortName>PIKP1</shortName>
    </recommendedName>
</protein>
<keyword id="KW-1185">Reference proteome</keyword>
<organism>
    <name type="scientific">Autographa californica nuclear polyhedrosis virus</name>
    <name type="common">AcMNPV</name>
    <dbReference type="NCBI Taxonomy" id="46015"/>
    <lineage>
        <taxon>Viruses</taxon>
        <taxon>Viruses incertae sedis</taxon>
        <taxon>Naldaviricetes</taxon>
        <taxon>Lefavirales</taxon>
        <taxon>Baculoviridae</taxon>
        <taxon>Alphabaculovirus</taxon>
        <taxon>Alphabaculovirus aucalifornicae</taxon>
    </lineage>
</organism>
<dbReference type="EMBL" id="L22858">
    <property type="protein sequence ID" value="AAA66654.1"/>
    <property type="molecule type" value="Genomic_DNA"/>
</dbReference>
<dbReference type="PIR" id="H72852">
    <property type="entry name" value="H72852"/>
</dbReference>
<dbReference type="KEGG" id="vg:1403856"/>
<dbReference type="OrthoDB" id="12745at10239"/>
<dbReference type="Proteomes" id="UP000008292">
    <property type="component" value="Segment"/>
</dbReference>
<dbReference type="InterPro" id="IPR009672">
    <property type="entry name" value="Pkip-1"/>
</dbReference>
<dbReference type="Pfam" id="PF06878">
    <property type="entry name" value="Pkip-1"/>
    <property type="match status" value="1"/>
</dbReference>
<gene>
    <name type="primary">AC24</name>
    <name type="ORF">ORF24</name>
</gene>
<comment type="function">
    <text evidence="1 2">Plays a role in the stimulation of the viral kinase PK1 function in very late transcription and in expression of genes required for budded virus production.</text>
</comment>
<comment type="subunit">
    <text evidence="1">Interacts with protein kinase PK1.</text>
</comment>
<reference key="1">
    <citation type="journal article" date="1994" name="Virology">
        <title>The complete DNA sequence of Autographa californica nuclear polyhedrosis virus.</title>
        <authorList>
            <person name="Ayres M.D."/>
            <person name="Howard S.C."/>
            <person name="Kuzio J."/>
            <person name="Lopez-Ferber M."/>
            <person name="Possee R.D."/>
        </authorList>
    </citation>
    <scope>NUCLEOTIDE SEQUENCE [LARGE SCALE GENOMIC DNA]</scope>
    <source>
        <strain>C6</strain>
    </source>
</reference>
<reference key="2">
    <citation type="journal article" date="1998" name="Virology">
        <title>Identification and characterization of a protein kinase-interacting protein encoded by the Autographa californica nuclear polyhedrosis virus.</title>
        <authorList>
            <person name="Fan X."/>
            <person name="McLachlin J.R."/>
            <person name="Weaver R.F."/>
        </authorList>
    </citation>
    <scope>INTERACTION WITH PK1</scope>
    <scope>FUNCTION</scope>
</reference>
<reference key="3">
    <citation type="journal article" date="1998" name="Virology">
        <title>A baculovirus mutant defective in PKIP, a protein which interacts with a virus-encoded protein kinase.</title>
        <authorList>
            <person name="McLachlin J.R."/>
            <person name="Yang S."/>
            <person name="Miller L.K."/>
        </authorList>
    </citation>
    <scope>FUNCTION</scope>
</reference>